<protein>
    <recommendedName>
        <fullName evidence="1">Aminomethyltransferase</fullName>
        <ecNumber evidence="1">2.1.2.10</ecNumber>
    </recommendedName>
    <alternativeName>
        <fullName evidence="1">Glycine cleavage system T protein</fullName>
    </alternativeName>
</protein>
<organism>
    <name type="scientific">Bacillus cytotoxicus (strain DSM 22905 / CIP 110041 / 391-98 / NVH 391-98)</name>
    <dbReference type="NCBI Taxonomy" id="315749"/>
    <lineage>
        <taxon>Bacteria</taxon>
        <taxon>Bacillati</taxon>
        <taxon>Bacillota</taxon>
        <taxon>Bacilli</taxon>
        <taxon>Bacillales</taxon>
        <taxon>Bacillaceae</taxon>
        <taxon>Bacillus</taxon>
        <taxon>Bacillus cereus group</taxon>
    </lineage>
</organism>
<comment type="function">
    <text evidence="1">The glycine cleavage system catalyzes the degradation of glycine.</text>
</comment>
<comment type="catalytic activity">
    <reaction evidence="1">
        <text>N(6)-[(R)-S(8)-aminomethyldihydrolipoyl]-L-lysyl-[protein] + (6S)-5,6,7,8-tetrahydrofolate = N(6)-[(R)-dihydrolipoyl]-L-lysyl-[protein] + (6R)-5,10-methylene-5,6,7,8-tetrahydrofolate + NH4(+)</text>
        <dbReference type="Rhea" id="RHEA:16945"/>
        <dbReference type="Rhea" id="RHEA-COMP:10475"/>
        <dbReference type="Rhea" id="RHEA-COMP:10492"/>
        <dbReference type="ChEBI" id="CHEBI:15636"/>
        <dbReference type="ChEBI" id="CHEBI:28938"/>
        <dbReference type="ChEBI" id="CHEBI:57453"/>
        <dbReference type="ChEBI" id="CHEBI:83100"/>
        <dbReference type="ChEBI" id="CHEBI:83143"/>
        <dbReference type="EC" id="2.1.2.10"/>
    </reaction>
</comment>
<comment type="subunit">
    <text evidence="1">The glycine cleavage system is composed of four proteins: P, T, L and H.</text>
</comment>
<comment type="similarity">
    <text evidence="1">Belongs to the GcvT family.</text>
</comment>
<sequence>MITLQRTPLFDVYAKYGGKTIDFGGWELPVQFSSIKEEHEAVRTAAGLFDVSHMGEVEVTGADSLAFLQRVVTNDVSTLKVGGAQYTAMCYENGGTVDDLLIYKRGEEDYLLVINASNIEKDYEWLASHVIGDTKVVNVSNEIAQLAIQGPKAEGILQKVVSEDLKEIKFFKFKNDVLVDGIPALVSRTGYTGEDGFEIYCKSEDAIKIWEKLLEVGEEDSLKPCGLGARDTLRFEATLPLYGQELSKDITPIEAGIGFAVKTNKEADFFGKEVLKEYKENGAPRKLVGIEVIERGIPRTHYPVYVGEEKIGEVTSGTQSPTLKKSIGLALIDVKYAAIDTEVEIEIRKKRVKAVVVPTPFYKRSK</sequence>
<feature type="chain" id="PRO_1000078585" description="Aminomethyltransferase">
    <location>
        <begin position="1"/>
        <end position="366"/>
    </location>
</feature>
<name>GCST_BACCN</name>
<reference key="1">
    <citation type="journal article" date="2008" name="Chem. Biol. Interact.">
        <title>Extending the Bacillus cereus group genomics to putative food-borne pathogens of different toxicity.</title>
        <authorList>
            <person name="Lapidus A."/>
            <person name="Goltsman E."/>
            <person name="Auger S."/>
            <person name="Galleron N."/>
            <person name="Segurens B."/>
            <person name="Dossat C."/>
            <person name="Land M.L."/>
            <person name="Broussolle V."/>
            <person name="Brillard J."/>
            <person name="Guinebretiere M.-H."/>
            <person name="Sanchis V."/>
            <person name="Nguen-the C."/>
            <person name="Lereclus D."/>
            <person name="Richardson P."/>
            <person name="Wincker P."/>
            <person name="Weissenbach J."/>
            <person name="Ehrlich S.D."/>
            <person name="Sorokin A."/>
        </authorList>
    </citation>
    <scope>NUCLEOTIDE SEQUENCE [LARGE SCALE GENOMIC DNA]</scope>
    <source>
        <strain>DSM 22905 / CIP 110041 / 391-98 / NVH 391-98</strain>
    </source>
</reference>
<keyword id="KW-0032">Aminotransferase</keyword>
<keyword id="KW-0808">Transferase</keyword>
<evidence type="ECO:0000255" key="1">
    <source>
        <dbReference type="HAMAP-Rule" id="MF_00259"/>
    </source>
</evidence>
<accession>A7GSN8</accession>
<gene>
    <name evidence="1" type="primary">gcvT</name>
    <name type="ordered locus">Bcer98_2915</name>
</gene>
<dbReference type="EC" id="2.1.2.10" evidence="1"/>
<dbReference type="EMBL" id="CP000764">
    <property type="protein sequence ID" value="ABS23146.1"/>
    <property type="molecule type" value="Genomic_DNA"/>
</dbReference>
<dbReference type="RefSeq" id="WP_012095374.1">
    <property type="nucleotide sequence ID" value="NC_009674.1"/>
</dbReference>
<dbReference type="SMR" id="A7GSN8"/>
<dbReference type="STRING" id="315749.Bcer98_2915"/>
<dbReference type="GeneID" id="33898167"/>
<dbReference type="KEGG" id="bcy:Bcer98_2915"/>
<dbReference type="eggNOG" id="COG0404">
    <property type="taxonomic scope" value="Bacteria"/>
</dbReference>
<dbReference type="HOGENOM" id="CLU_007884_10_2_9"/>
<dbReference type="OrthoDB" id="9774591at2"/>
<dbReference type="Proteomes" id="UP000002300">
    <property type="component" value="Chromosome"/>
</dbReference>
<dbReference type="GO" id="GO:0005829">
    <property type="term" value="C:cytosol"/>
    <property type="evidence" value="ECO:0007669"/>
    <property type="project" value="TreeGrafter"/>
</dbReference>
<dbReference type="GO" id="GO:0005960">
    <property type="term" value="C:glycine cleavage complex"/>
    <property type="evidence" value="ECO:0007669"/>
    <property type="project" value="InterPro"/>
</dbReference>
<dbReference type="GO" id="GO:0004047">
    <property type="term" value="F:aminomethyltransferase activity"/>
    <property type="evidence" value="ECO:0007669"/>
    <property type="project" value="UniProtKB-UniRule"/>
</dbReference>
<dbReference type="GO" id="GO:0008483">
    <property type="term" value="F:transaminase activity"/>
    <property type="evidence" value="ECO:0007669"/>
    <property type="project" value="UniProtKB-KW"/>
</dbReference>
<dbReference type="GO" id="GO:0019464">
    <property type="term" value="P:glycine decarboxylation via glycine cleavage system"/>
    <property type="evidence" value="ECO:0007669"/>
    <property type="project" value="UniProtKB-UniRule"/>
</dbReference>
<dbReference type="FunFam" id="2.40.30.110:FF:000003">
    <property type="entry name" value="Aminomethyltransferase"/>
    <property type="match status" value="1"/>
</dbReference>
<dbReference type="FunFam" id="3.30.70.1400:FF:000001">
    <property type="entry name" value="Aminomethyltransferase"/>
    <property type="match status" value="1"/>
</dbReference>
<dbReference type="FunFam" id="4.10.1250.10:FF:000001">
    <property type="entry name" value="Aminomethyltransferase"/>
    <property type="match status" value="1"/>
</dbReference>
<dbReference type="Gene3D" id="2.40.30.110">
    <property type="entry name" value="Aminomethyltransferase beta-barrel domains"/>
    <property type="match status" value="1"/>
</dbReference>
<dbReference type="Gene3D" id="3.30.70.1400">
    <property type="entry name" value="Aminomethyltransferase beta-barrel domains"/>
    <property type="match status" value="1"/>
</dbReference>
<dbReference type="Gene3D" id="4.10.1250.10">
    <property type="entry name" value="Aminomethyltransferase fragment"/>
    <property type="match status" value="1"/>
</dbReference>
<dbReference type="Gene3D" id="3.30.1360.120">
    <property type="entry name" value="Probable tRNA modification gtpase trme, domain 1"/>
    <property type="match status" value="1"/>
</dbReference>
<dbReference type="HAMAP" id="MF_00259">
    <property type="entry name" value="GcvT"/>
    <property type="match status" value="1"/>
</dbReference>
<dbReference type="InterPro" id="IPR006223">
    <property type="entry name" value="GCS_T"/>
</dbReference>
<dbReference type="InterPro" id="IPR022903">
    <property type="entry name" value="GCS_T_bac"/>
</dbReference>
<dbReference type="InterPro" id="IPR013977">
    <property type="entry name" value="GCST_C"/>
</dbReference>
<dbReference type="InterPro" id="IPR006222">
    <property type="entry name" value="GCV_T_N"/>
</dbReference>
<dbReference type="InterPro" id="IPR028896">
    <property type="entry name" value="GcvT/YgfZ/DmdA"/>
</dbReference>
<dbReference type="InterPro" id="IPR029043">
    <property type="entry name" value="GcvT/YgfZ_C"/>
</dbReference>
<dbReference type="InterPro" id="IPR027266">
    <property type="entry name" value="TrmE/GcvT_dom1"/>
</dbReference>
<dbReference type="NCBIfam" id="TIGR00528">
    <property type="entry name" value="gcvT"/>
    <property type="match status" value="1"/>
</dbReference>
<dbReference type="NCBIfam" id="NF001567">
    <property type="entry name" value="PRK00389.1"/>
    <property type="match status" value="1"/>
</dbReference>
<dbReference type="PANTHER" id="PTHR43757">
    <property type="entry name" value="AMINOMETHYLTRANSFERASE"/>
    <property type="match status" value="1"/>
</dbReference>
<dbReference type="PANTHER" id="PTHR43757:SF2">
    <property type="entry name" value="AMINOMETHYLTRANSFERASE, MITOCHONDRIAL"/>
    <property type="match status" value="1"/>
</dbReference>
<dbReference type="Pfam" id="PF01571">
    <property type="entry name" value="GCV_T"/>
    <property type="match status" value="1"/>
</dbReference>
<dbReference type="Pfam" id="PF08669">
    <property type="entry name" value="GCV_T_C"/>
    <property type="match status" value="1"/>
</dbReference>
<dbReference type="PIRSF" id="PIRSF006487">
    <property type="entry name" value="GcvT"/>
    <property type="match status" value="1"/>
</dbReference>
<dbReference type="SUPFAM" id="SSF101790">
    <property type="entry name" value="Aminomethyltransferase beta-barrel domain"/>
    <property type="match status" value="1"/>
</dbReference>
<dbReference type="SUPFAM" id="SSF103025">
    <property type="entry name" value="Folate-binding domain"/>
    <property type="match status" value="1"/>
</dbReference>
<proteinExistence type="inferred from homology"/>